<feature type="signal peptide" evidence="2">
    <location>
        <begin position="1"/>
        <end position="18"/>
    </location>
</feature>
<feature type="chain" id="PRO_0000407771" description="Maintenance of telomere capping protein 6">
    <location>
        <begin position="19"/>
        <end position="450"/>
    </location>
</feature>
<feature type="topological domain" description="Extracellular" evidence="2">
    <location>
        <begin position="19"/>
        <end position="397"/>
    </location>
</feature>
<feature type="transmembrane region" description="Helical" evidence="2">
    <location>
        <begin position="398"/>
        <end position="418"/>
    </location>
</feature>
<feature type="topological domain" description="Cytoplasmic" evidence="2">
    <location>
        <begin position="419"/>
        <end position="450"/>
    </location>
</feature>
<feature type="glycosylation site" description="N-linked (GlcNAc...) asparagine" evidence="2">
    <location>
        <position position="204"/>
    </location>
</feature>
<feature type="glycosylation site" description="N-linked (GlcNAc...) asparagine" evidence="2">
    <location>
        <position position="247"/>
    </location>
</feature>
<reference key="1">
    <citation type="journal article" date="2004" name="Science">
        <title>The Ashbya gossypii genome as a tool for mapping the ancient Saccharomyces cerevisiae genome.</title>
        <authorList>
            <person name="Dietrich F.S."/>
            <person name="Voegeli S."/>
            <person name="Brachat S."/>
            <person name="Lerch A."/>
            <person name="Gates K."/>
            <person name="Steiner S."/>
            <person name="Mohr C."/>
            <person name="Poehlmann R."/>
            <person name="Luedi P."/>
            <person name="Choi S."/>
            <person name="Wing R.A."/>
            <person name="Flavier A."/>
            <person name="Gaffney T.D."/>
            <person name="Philippsen P."/>
        </authorList>
    </citation>
    <scope>NUCLEOTIDE SEQUENCE [LARGE SCALE GENOMIC DNA]</scope>
    <source>
        <strain>ATCC 10895 / CBS 109.51 / FGSC 9923 / NRRL Y-1056</strain>
    </source>
</reference>
<reference key="2">
    <citation type="journal article" date="2013" name="G3 (Bethesda)">
        <title>Genomes of Ashbya fungi isolated from insects reveal four mating-type loci, numerous translocations, lack of transposons, and distinct gene duplications.</title>
        <authorList>
            <person name="Dietrich F.S."/>
            <person name="Voegeli S."/>
            <person name="Kuo S."/>
            <person name="Philippsen P."/>
        </authorList>
    </citation>
    <scope>GENOME REANNOTATION</scope>
    <source>
        <strain>ATCC 10895 / CBS 109.51 / FGSC 9923 / NRRL Y-1056</strain>
    </source>
</reference>
<name>MTC6_EREGS</name>
<dbReference type="EMBL" id="AE016817">
    <property type="protein sequence ID" value="AAS51783.2"/>
    <property type="molecule type" value="Genomic_DNA"/>
</dbReference>
<dbReference type="RefSeq" id="NP_983959.2">
    <property type="nucleotide sequence ID" value="NM_209312.2"/>
</dbReference>
<dbReference type="FunCoup" id="Q75AQ7">
    <property type="interactions" value="22"/>
</dbReference>
<dbReference type="STRING" id="284811.Q75AQ7"/>
<dbReference type="GlyCosmos" id="Q75AQ7">
    <property type="glycosylation" value="2 sites, No reported glycans"/>
</dbReference>
<dbReference type="EnsemblFungi" id="AAS51783">
    <property type="protein sequence ID" value="AAS51783"/>
    <property type="gene ID" value="AGOS_ADL137W"/>
</dbReference>
<dbReference type="GeneID" id="4620101"/>
<dbReference type="KEGG" id="ago:AGOS_ADL137W"/>
<dbReference type="eggNOG" id="ENOG502QVFP">
    <property type="taxonomic scope" value="Eukaryota"/>
</dbReference>
<dbReference type="HOGENOM" id="CLU_033723_0_0_1"/>
<dbReference type="InParanoid" id="Q75AQ7"/>
<dbReference type="OMA" id="EVANCHE"/>
<dbReference type="OrthoDB" id="5573651at2759"/>
<dbReference type="Proteomes" id="UP000000591">
    <property type="component" value="Chromosome IV"/>
</dbReference>
<dbReference type="GO" id="GO:0005789">
    <property type="term" value="C:endoplasmic reticulum membrane"/>
    <property type="evidence" value="ECO:0007669"/>
    <property type="project" value="EnsemblFungi"/>
</dbReference>
<dbReference type="GO" id="GO:0071464">
    <property type="term" value="P:cellular response to hydrostatic pressure"/>
    <property type="evidence" value="ECO:0007669"/>
    <property type="project" value="EnsemblFungi"/>
</dbReference>
<dbReference type="InterPro" id="IPR018378">
    <property type="entry name" value="C-type_lectin_CS"/>
</dbReference>
<dbReference type="InterPro" id="IPR051008">
    <property type="entry name" value="Telomere_Capping_Maintenance"/>
</dbReference>
<dbReference type="PANTHER" id="PTHR35518:SF2">
    <property type="entry name" value="MAINTENANCE OF TELOMERE CAPPING PROTEIN 6"/>
    <property type="match status" value="1"/>
</dbReference>
<dbReference type="PANTHER" id="PTHR35518">
    <property type="entry name" value="MAINTENANCE OF TELOMOERE CAPPING"/>
    <property type="match status" value="1"/>
</dbReference>
<dbReference type="Pfam" id="PF25506">
    <property type="entry name" value="TIM-barrel_MTC6"/>
    <property type="match status" value="2"/>
</dbReference>
<accession>Q75AQ7</accession>
<comment type="function">
    <text evidence="1">May be involved in telomere capping.</text>
</comment>
<comment type="subcellular location">
    <subcellularLocation>
        <location evidence="3">Membrane</location>
        <topology evidence="3">Single-pass type I membrane protein</topology>
    </subcellularLocation>
</comment>
<comment type="similarity">
    <text evidence="3">Belongs to the MTC6 family.</text>
</comment>
<gene>
    <name type="primary">MTC6</name>
    <name type="ordered locus">ADL137W</name>
</gene>
<organism>
    <name type="scientific">Eremothecium gossypii (strain ATCC 10895 / CBS 109.51 / FGSC 9923 / NRRL Y-1056)</name>
    <name type="common">Yeast</name>
    <name type="synonym">Ashbya gossypii</name>
    <dbReference type="NCBI Taxonomy" id="284811"/>
    <lineage>
        <taxon>Eukaryota</taxon>
        <taxon>Fungi</taxon>
        <taxon>Dikarya</taxon>
        <taxon>Ascomycota</taxon>
        <taxon>Saccharomycotina</taxon>
        <taxon>Saccharomycetes</taxon>
        <taxon>Saccharomycetales</taxon>
        <taxon>Saccharomycetaceae</taxon>
        <taxon>Eremothecium</taxon>
    </lineage>
</organism>
<protein>
    <recommendedName>
        <fullName>Maintenance of telomere capping protein 6</fullName>
    </recommendedName>
</protein>
<proteinExistence type="inferred from homology"/>
<evidence type="ECO:0000250" key="1"/>
<evidence type="ECO:0000255" key="2"/>
<evidence type="ECO:0000305" key="3"/>
<sequence>MGSFLLCLLLVQLQWCLCSNVLDDLLQQTNIAFLSQQDVIGVIPVNQIPLVGVELCSMFETVGDGQDTLAAMLQTGVQTLVMDIGYDEDAGGWQMCGRTSLSEGISTVSRQIERLFPTLYANLVVLVLRGGAAEAHYEALRDAIGRVGRWTYSAEKVKATSPHLNSLLDDQEKRVLVVALDDSLCEALGTVAFGPEDVAYVEGNDTIDCSEHTDSWSFIEREFHWTDVREYVRLGCSPVITGKSVANISELEALVKVAQVWSWGAGEPALTDANSEMQRCASLGYDSATERATWKSTSCRQNLPVLCQAVNDRYSWLVGTRNLRFDQLNMDSCPSGYKPSVPRTPLEQREVERYLSEHHPSDGQYWIYLNSISVEKCWVVGGPETPCPYVALVSTRNFAAMIVTSSILVLLLLVLIILLDLVRVPIQDNRRSWKRALGSYSKAETEGVPM</sequence>
<keyword id="KW-0325">Glycoprotein</keyword>
<keyword id="KW-0472">Membrane</keyword>
<keyword id="KW-1185">Reference proteome</keyword>
<keyword id="KW-0732">Signal</keyword>
<keyword id="KW-0812">Transmembrane</keyword>
<keyword id="KW-1133">Transmembrane helix</keyword>